<protein>
    <recommendedName>
        <fullName evidence="1">Protein-L-isoaspartate O-methyltransferase</fullName>
        <ecNumber evidence="1">2.1.1.77</ecNumber>
    </recommendedName>
    <alternativeName>
        <fullName evidence="1">L-isoaspartyl protein carboxyl methyltransferase</fullName>
    </alternativeName>
    <alternativeName>
        <fullName evidence="1">Protein L-isoaspartyl methyltransferase</fullName>
    </alternativeName>
    <alternativeName>
        <fullName evidence="1">Protein-beta-aspartate methyltransferase</fullName>
        <shortName evidence="1">PIMT</shortName>
    </alternativeName>
</protein>
<organism>
    <name type="scientific">Idiomarina loihiensis (strain ATCC BAA-735 / DSM 15497 / L2-TR)</name>
    <dbReference type="NCBI Taxonomy" id="283942"/>
    <lineage>
        <taxon>Bacteria</taxon>
        <taxon>Pseudomonadati</taxon>
        <taxon>Pseudomonadota</taxon>
        <taxon>Gammaproteobacteria</taxon>
        <taxon>Alteromonadales</taxon>
        <taxon>Idiomarinaceae</taxon>
        <taxon>Idiomarina</taxon>
    </lineage>
</organism>
<accession>Q5QUB2</accession>
<sequence length="213" mass="23644">MISNGQSRVKRLIQQLEALGITNKEVLRVISETPRHLFMPESLAHKAYENTALPIGNGQTISQPLMVATMTQLLMQHHCKNVLEIGTGSGYQTAVLAQLVDKVFSVERIATLQYQAKRRMRQLDLHNVAMRHGDGWKGWRSKGPFDGIIVTAAASDIPQDLVDQLADGGVMIIPVGEQHQSQSLVVMRRFGDSLEQQRIGDVRFVPLVKGDVV</sequence>
<reference key="1">
    <citation type="journal article" date="2004" name="Proc. Natl. Acad. Sci. U.S.A.">
        <title>Genome sequence of the deep-sea gamma-proteobacterium Idiomarina loihiensis reveals amino acid fermentation as a source of carbon and energy.</title>
        <authorList>
            <person name="Hou S."/>
            <person name="Saw J.H."/>
            <person name="Lee K.S."/>
            <person name="Freitas T.A."/>
            <person name="Belisle C."/>
            <person name="Kawarabayasi Y."/>
            <person name="Donachie S.P."/>
            <person name="Pikina A."/>
            <person name="Galperin M.Y."/>
            <person name="Koonin E.V."/>
            <person name="Makarova K.S."/>
            <person name="Omelchenko M.V."/>
            <person name="Sorokin A."/>
            <person name="Wolf Y.I."/>
            <person name="Li Q.X."/>
            <person name="Keum Y.S."/>
            <person name="Campbell S."/>
            <person name="Denery J."/>
            <person name="Aizawa S."/>
            <person name="Shibata S."/>
            <person name="Malahoff A."/>
            <person name="Alam M."/>
        </authorList>
    </citation>
    <scope>NUCLEOTIDE SEQUENCE [LARGE SCALE GENOMIC DNA]</scope>
    <source>
        <strain>ATCC BAA-735 / DSM 15497 / L2-TR</strain>
    </source>
</reference>
<feature type="chain" id="PRO_1000093258" description="Protein-L-isoaspartate O-methyltransferase">
    <location>
        <begin position="1"/>
        <end position="213"/>
    </location>
</feature>
<feature type="active site" evidence="1">
    <location>
        <position position="62"/>
    </location>
</feature>
<gene>
    <name evidence="1" type="primary">pcm</name>
    <name type="ordered locus">IL0748</name>
</gene>
<keyword id="KW-0963">Cytoplasm</keyword>
<keyword id="KW-0489">Methyltransferase</keyword>
<keyword id="KW-1185">Reference proteome</keyword>
<keyword id="KW-0949">S-adenosyl-L-methionine</keyword>
<keyword id="KW-0808">Transferase</keyword>
<comment type="function">
    <text evidence="1">Catalyzes the methyl esterification of L-isoaspartyl residues in peptides and proteins that result from spontaneous decomposition of normal L-aspartyl and L-asparaginyl residues. It plays a role in the repair and/or degradation of damaged proteins.</text>
</comment>
<comment type="catalytic activity">
    <reaction evidence="1">
        <text>[protein]-L-isoaspartate + S-adenosyl-L-methionine = [protein]-L-isoaspartate alpha-methyl ester + S-adenosyl-L-homocysteine</text>
        <dbReference type="Rhea" id="RHEA:12705"/>
        <dbReference type="Rhea" id="RHEA-COMP:12143"/>
        <dbReference type="Rhea" id="RHEA-COMP:12144"/>
        <dbReference type="ChEBI" id="CHEBI:57856"/>
        <dbReference type="ChEBI" id="CHEBI:59789"/>
        <dbReference type="ChEBI" id="CHEBI:90596"/>
        <dbReference type="ChEBI" id="CHEBI:90598"/>
        <dbReference type="EC" id="2.1.1.77"/>
    </reaction>
</comment>
<comment type="subcellular location">
    <subcellularLocation>
        <location evidence="1">Cytoplasm</location>
    </subcellularLocation>
</comment>
<comment type="similarity">
    <text evidence="1">Belongs to the methyltransferase superfamily. L-isoaspartyl/D-aspartyl protein methyltransferase family.</text>
</comment>
<proteinExistence type="inferred from homology"/>
<evidence type="ECO:0000255" key="1">
    <source>
        <dbReference type="HAMAP-Rule" id="MF_00090"/>
    </source>
</evidence>
<name>PIMT_IDILO</name>
<dbReference type="EC" id="2.1.1.77" evidence="1"/>
<dbReference type="EMBL" id="AE017340">
    <property type="protein sequence ID" value="AAV81589.1"/>
    <property type="molecule type" value="Genomic_DNA"/>
</dbReference>
<dbReference type="SMR" id="Q5QUB2"/>
<dbReference type="STRING" id="283942.IL0748"/>
<dbReference type="KEGG" id="ilo:IL0748"/>
<dbReference type="eggNOG" id="COG2518">
    <property type="taxonomic scope" value="Bacteria"/>
</dbReference>
<dbReference type="HOGENOM" id="CLU_055432_2_0_6"/>
<dbReference type="Proteomes" id="UP000001171">
    <property type="component" value="Chromosome"/>
</dbReference>
<dbReference type="GO" id="GO:0005737">
    <property type="term" value="C:cytoplasm"/>
    <property type="evidence" value="ECO:0007669"/>
    <property type="project" value="UniProtKB-SubCell"/>
</dbReference>
<dbReference type="GO" id="GO:0004719">
    <property type="term" value="F:protein-L-isoaspartate (D-aspartate) O-methyltransferase activity"/>
    <property type="evidence" value="ECO:0007669"/>
    <property type="project" value="UniProtKB-UniRule"/>
</dbReference>
<dbReference type="GO" id="GO:0032259">
    <property type="term" value="P:methylation"/>
    <property type="evidence" value="ECO:0007669"/>
    <property type="project" value="UniProtKB-KW"/>
</dbReference>
<dbReference type="GO" id="GO:0036211">
    <property type="term" value="P:protein modification process"/>
    <property type="evidence" value="ECO:0007669"/>
    <property type="project" value="UniProtKB-UniRule"/>
</dbReference>
<dbReference type="GO" id="GO:0030091">
    <property type="term" value="P:protein repair"/>
    <property type="evidence" value="ECO:0007669"/>
    <property type="project" value="UniProtKB-UniRule"/>
</dbReference>
<dbReference type="CDD" id="cd02440">
    <property type="entry name" value="AdoMet_MTases"/>
    <property type="match status" value="1"/>
</dbReference>
<dbReference type="FunFam" id="3.40.50.150:FF:000010">
    <property type="entry name" value="Protein-L-isoaspartate O-methyltransferase"/>
    <property type="match status" value="1"/>
</dbReference>
<dbReference type="Gene3D" id="3.40.50.150">
    <property type="entry name" value="Vaccinia Virus protein VP39"/>
    <property type="match status" value="1"/>
</dbReference>
<dbReference type="HAMAP" id="MF_00090">
    <property type="entry name" value="PIMT"/>
    <property type="match status" value="1"/>
</dbReference>
<dbReference type="InterPro" id="IPR000682">
    <property type="entry name" value="PCMT"/>
</dbReference>
<dbReference type="InterPro" id="IPR029063">
    <property type="entry name" value="SAM-dependent_MTases_sf"/>
</dbReference>
<dbReference type="NCBIfam" id="TIGR00080">
    <property type="entry name" value="pimt"/>
    <property type="match status" value="1"/>
</dbReference>
<dbReference type="NCBIfam" id="NF001453">
    <property type="entry name" value="PRK00312.1"/>
    <property type="match status" value="1"/>
</dbReference>
<dbReference type="PANTHER" id="PTHR11579">
    <property type="entry name" value="PROTEIN-L-ISOASPARTATE O-METHYLTRANSFERASE"/>
    <property type="match status" value="1"/>
</dbReference>
<dbReference type="PANTHER" id="PTHR11579:SF0">
    <property type="entry name" value="PROTEIN-L-ISOASPARTATE(D-ASPARTATE) O-METHYLTRANSFERASE"/>
    <property type="match status" value="1"/>
</dbReference>
<dbReference type="Pfam" id="PF01135">
    <property type="entry name" value="PCMT"/>
    <property type="match status" value="1"/>
</dbReference>
<dbReference type="SUPFAM" id="SSF53335">
    <property type="entry name" value="S-adenosyl-L-methionine-dependent methyltransferases"/>
    <property type="match status" value="1"/>
</dbReference>
<dbReference type="PROSITE" id="PS01279">
    <property type="entry name" value="PCMT"/>
    <property type="match status" value="1"/>
</dbReference>